<evidence type="ECO:0000255" key="1">
    <source>
        <dbReference type="HAMAP-Rule" id="MF_00567"/>
    </source>
</evidence>
<protein>
    <recommendedName>
        <fullName evidence="1">Quinolinate synthase</fullName>
        <ecNumber evidence="1">2.5.1.72</ecNumber>
    </recommendedName>
</protein>
<gene>
    <name evidence="1" type="primary">nadA</name>
    <name type="ordered locus">SSPA1854</name>
</gene>
<organism>
    <name type="scientific">Salmonella paratyphi A (strain AKU_12601)</name>
    <dbReference type="NCBI Taxonomy" id="554290"/>
    <lineage>
        <taxon>Bacteria</taxon>
        <taxon>Pseudomonadati</taxon>
        <taxon>Pseudomonadota</taxon>
        <taxon>Gammaproteobacteria</taxon>
        <taxon>Enterobacterales</taxon>
        <taxon>Enterobacteriaceae</taxon>
        <taxon>Salmonella</taxon>
    </lineage>
</organism>
<reference key="1">
    <citation type="journal article" date="2009" name="BMC Genomics">
        <title>Pseudogene accumulation in the evolutionary histories of Salmonella enterica serovars Paratyphi A and Typhi.</title>
        <authorList>
            <person name="Holt K.E."/>
            <person name="Thomson N.R."/>
            <person name="Wain J."/>
            <person name="Langridge G.C."/>
            <person name="Hasan R."/>
            <person name="Bhutta Z.A."/>
            <person name="Quail M.A."/>
            <person name="Norbertczak H."/>
            <person name="Walker D."/>
            <person name="Simmonds M."/>
            <person name="White B."/>
            <person name="Bason N."/>
            <person name="Mungall K."/>
            <person name="Dougan G."/>
            <person name="Parkhill J."/>
        </authorList>
    </citation>
    <scope>NUCLEOTIDE SEQUENCE [LARGE SCALE GENOMIC DNA]</scope>
    <source>
        <strain>AKU_12601</strain>
    </source>
</reference>
<dbReference type="EC" id="2.5.1.72" evidence="1"/>
<dbReference type="EMBL" id="FM200053">
    <property type="protein sequence ID" value="CAR60051.1"/>
    <property type="molecule type" value="Genomic_DNA"/>
</dbReference>
<dbReference type="RefSeq" id="WP_000115334.1">
    <property type="nucleotide sequence ID" value="NC_011147.1"/>
</dbReference>
<dbReference type="SMR" id="B5BC59"/>
<dbReference type="KEGG" id="sek:SSPA1854"/>
<dbReference type="HOGENOM" id="CLU_047382_1_0_6"/>
<dbReference type="UniPathway" id="UPA00253">
    <property type="reaction ID" value="UER00327"/>
</dbReference>
<dbReference type="Proteomes" id="UP000001869">
    <property type="component" value="Chromosome"/>
</dbReference>
<dbReference type="GO" id="GO:0005829">
    <property type="term" value="C:cytosol"/>
    <property type="evidence" value="ECO:0007669"/>
    <property type="project" value="TreeGrafter"/>
</dbReference>
<dbReference type="GO" id="GO:0051539">
    <property type="term" value="F:4 iron, 4 sulfur cluster binding"/>
    <property type="evidence" value="ECO:0007669"/>
    <property type="project" value="UniProtKB-KW"/>
</dbReference>
<dbReference type="GO" id="GO:0046872">
    <property type="term" value="F:metal ion binding"/>
    <property type="evidence" value="ECO:0007669"/>
    <property type="project" value="UniProtKB-KW"/>
</dbReference>
<dbReference type="GO" id="GO:0008987">
    <property type="term" value="F:quinolinate synthetase A activity"/>
    <property type="evidence" value="ECO:0007669"/>
    <property type="project" value="UniProtKB-UniRule"/>
</dbReference>
<dbReference type="GO" id="GO:0034628">
    <property type="term" value="P:'de novo' NAD biosynthetic process from L-aspartate"/>
    <property type="evidence" value="ECO:0007669"/>
    <property type="project" value="TreeGrafter"/>
</dbReference>
<dbReference type="FunFam" id="3.40.50.10800:FF:000003">
    <property type="entry name" value="Quinolinate synthase A"/>
    <property type="match status" value="1"/>
</dbReference>
<dbReference type="Gene3D" id="3.40.50.10800">
    <property type="entry name" value="NadA-like"/>
    <property type="match status" value="3"/>
</dbReference>
<dbReference type="HAMAP" id="MF_00567">
    <property type="entry name" value="NadA_type1"/>
    <property type="match status" value="1"/>
</dbReference>
<dbReference type="InterPro" id="IPR003473">
    <property type="entry name" value="NadA"/>
</dbReference>
<dbReference type="InterPro" id="IPR036094">
    <property type="entry name" value="NadA_sf"/>
</dbReference>
<dbReference type="InterPro" id="IPR023513">
    <property type="entry name" value="Quinolinate_synth_A_type1"/>
</dbReference>
<dbReference type="NCBIfam" id="TIGR00550">
    <property type="entry name" value="nadA"/>
    <property type="match status" value="1"/>
</dbReference>
<dbReference type="NCBIfam" id="NF006877">
    <property type="entry name" value="PRK09375.1-1"/>
    <property type="match status" value="1"/>
</dbReference>
<dbReference type="NCBIfam" id="NF006878">
    <property type="entry name" value="PRK09375.1-2"/>
    <property type="match status" value="1"/>
</dbReference>
<dbReference type="PANTHER" id="PTHR30573:SF0">
    <property type="entry name" value="QUINOLINATE SYNTHASE, CHLOROPLASTIC"/>
    <property type="match status" value="1"/>
</dbReference>
<dbReference type="PANTHER" id="PTHR30573">
    <property type="entry name" value="QUINOLINATE SYNTHETASE A"/>
    <property type="match status" value="1"/>
</dbReference>
<dbReference type="Pfam" id="PF02445">
    <property type="entry name" value="NadA"/>
    <property type="match status" value="1"/>
</dbReference>
<dbReference type="SUPFAM" id="SSF142754">
    <property type="entry name" value="NadA-like"/>
    <property type="match status" value="1"/>
</dbReference>
<keyword id="KW-0004">4Fe-4S</keyword>
<keyword id="KW-0963">Cytoplasm</keyword>
<keyword id="KW-0408">Iron</keyword>
<keyword id="KW-0411">Iron-sulfur</keyword>
<keyword id="KW-0479">Metal-binding</keyword>
<keyword id="KW-0662">Pyridine nucleotide biosynthesis</keyword>
<keyword id="KW-0808">Transferase</keyword>
<accession>B5BC59</accession>
<sequence length="347" mass="37927">MSVMFDPQAAIYPFPPKPTPLNDDEKQFYREKIKRLLKERNAVMVAHYYTDPEIQQLAEETGGCISDSLEMARFGAKHAASTLLVAGVRFMGETAKILSPEKNILMPTLAAECSLDLGCPIDEFSAFCDAHPDRTVVVYANTSAAVKARADWVVTSSIAVELIEHLDSLGEKIIWAPDRHLGNYVQKQTGADVLCWQGACIVHDEFKTQALTRLKKIYPDAALLVHPESPQSIVEMADAVGSTSQLIKAAKTLPHRQLIVATDRGIFYKMQQAVPEKELLEAPTAGEGATCRSCAHCPWMAMNGLKAIAEGLEQGGAAHEIQVDAALREGALLPLNRMLDFAATLRA</sequence>
<proteinExistence type="inferred from homology"/>
<feature type="chain" id="PRO_1000129427" description="Quinolinate synthase">
    <location>
        <begin position="1"/>
        <end position="347"/>
    </location>
</feature>
<feature type="binding site" evidence="1">
    <location>
        <position position="47"/>
    </location>
    <ligand>
        <name>iminosuccinate</name>
        <dbReference type="ChEBI" id="CHEBI:77875"/>
    </ligand>
</feature>
<feature type="binding site" evidence="1">
    <location>
        <position position="68"/>
    </location>
    <ligand>
        <name>iminosuccinate</name>
        <dbReference type="ChEBI" id="CHEBI:77875"/>
    </ligand>
</feature>
<feature type="binding site" evidence="1">
    <location>
        <position position="113"/>
    </location>
    <ligand>
        <name>[4Fe-4S] cluster</name>
        <dbReference type="ChEBI" id="CHEBI:49883"/>
    </ligand>
</feature>
<feature type="binding site" evidence="1">
    <location>
        <begin position="139"/>
        <end position="141"/>
    </location>
    <ligand>
        <name>iminosuccinate</name>
        <dbReference type="ChEBI" id="CHEBI:77875"/>
    </ligand>
</feature>
<feature type="binding site" evidence="1">
    <location>
        <position position="156"/>
    </location>
    <ligand>
        <name>iminosuccinate</name>
        <dbReference type="ChEBI" id="CHEBI:77875"/>
    </ligand>
</feature>
<feature type="binding site" evidence="1">
    <location>
        <position position="200"/>
    </location>
    <ligand>
        <name>[4Fe-4S] cluster</name>
        <dbReference type="ChEBI" id="CHEBI:49883"/>
    </ligand>
</feature>
<feature type="binding site" evidence="1">
    <location>
        <begin position="226"/>
        <end position="228"/>
    </location>
    <ligand>
        <name>iminosuccinate</name>
        <dbReference type="ChEBI" id="CHEBI:77875"/>
    </ligand>
</feature>
<feature type="binding site" evidence="1">
    <location>
        <position position="243"/>
    </location>
    <ligand>
        <name>iminosuccinate</name>
        <dbReference type="ChEBI" id="CHEBI:77875"/>
    </ligand>
</feature>
<feature type="binding site" evidence="1">
    <location>
        <position position="297"/>
    </location>
    <ligand>
        <name>[4Fe-4S] cluster</name>
        <dbReference type="ChEBI" id="CHEBI:49883"/>
    </ligand>
</feature>
<name>NADA_SALPK</name>
<comment type="function">
    <text evidence="1">Catalyzes the condensation of iminoaspartate with dihydroxyacetone phosphate to form quinolinate.</text>
</comment>
<comment type="catalytic activity">
    <reaction evidence="1">
        <text>iminosuccinate + dihydroxyacetone phosphate = quinolinate + phosphate + 2 H2O + H(+)</text>
        <dbReference type="Rhea" id="RHEA:25888"/>
        <dbReference type="ChEBI" id="CHEBI:15377"/>
        <dbReference type="ChEBI" id="CHEBI:15378"/>
        <dbReference type="ChEBI" id="CHEBI:29959"/>
        <dbReference type="ChEBI" id="CHEBI:43474"/>
        <dbReference type="ChEBI" id="CHEBI:57642"/>
        <dbReference type="ChEBI" id="CHEBI:77875"/>
        <dbReference type="EC" id="2.5.1.72"/>
    </reaction>
    <physiologicalReaction direction="left-to-right" evidence="1">
        <dbReference type="Rhea" id="RHEA:25889"/>
    </physiologicalReaction>
</comment>
<comment type="cofactor">
    <cofactor evidence="1">
        <name>[4Fe-4S] cluster</name>
        <dbReference type="ChEBI" id="CHEBI:49883"/>
    </cofactor>
    <text evidence="1">Binds 1 [4Fe-4S] cluster per subunit.</text>
</comment>
<comment type="pathway">
    <text evidence="1">Cofactor biosynthesis; NAD(+) biosynthesis; quinolinate from iminoaspartate: step 1/1.</text>
</comment>
<comment type="subcellular location">
    <subcellularLocation>
        <location evidence="1">Cytoplasm</location>
    </subcellularLocation>
</comment>
<comment type="similarity">
    <text evidence="1">Belongs to the quinolinate synthase family. Type 1 subfamily.</text>
</comment>